<keyword id="KW-0007">Acetylation</keyword>
<keyword id="KW-0030">Aminoacyl-tRNA synthetase</keyword>
<keyword id="KW-0067">ATP-binding</keyword>
<keyword id="KW-0436">Ligase</keyword>
<keyword id="KW-0496">Mitochondrion</keyword>
<keyword id="KW-0547">Nucleotide-binding</keyword>
<keyword id="KW-0648">Protein biosynthesis</keyword>
<keyword id="KW-1185">Reference proteome</keyword>
<keyword id="KW-0809">Transit peptide</keyword>
<evidence type="ECO:0000250" key="1">
    <source>
        <dbReference type="UniProtKB" id="P00956"/>
    </source>
</evidence>
<evidence type="ECO:0000250" key="2">
    <source>
        <dbReference type="UniProtKB" id="Q8BIJ6"/>
    </source>
</evidence>
<evidence type="ECO:0000250" key="3">
    <source>
        <dbReference type="UniProtKB" id="Q9NSE4"/>
    </source>
</evidence>
<evidence type="ECO:0000255" key="4"/>
<evidence type="ECO:0000305" key="5"/>
<name>SYIM_MACFA</name>
<comment type="function">
    <text evidence="1">Aminoacyl-tRNA synthetase that catalyzes the specific attachment of isoleucine to its cognate tRNA (tRNA(Ile)).</text>
</comment>
<comment type="catalytic activity">
    <reaction evidence="1">
        <text>tRNA(Ile) + L-isoleucine + ATP = L-isoleucyl-tRNA(Ile) + AMP + diphosphate</text>
        <dbReference type="Rhea" id="RHEA:11060"/>
        <dbReference type="Rhea" id="RHEA-COMP:9666"/>
        <dbReference type="Rhea" id="RHEA-COMP:9695"/>
        <dbReference type="ChEBI" id="CHEBI:30616"/>
        <dbReference type="ChEBI" id="CHEBI:33019"/>
        <dbReference type="ChEBI" id="CHEBI:58045"/>
        <dbReference type="ChEBI" id="CHEBI:78442"/>
        <dbReference type="ChEBI" id="CHEBI:78528"/>
        <dbReference type="ChEBI" id="CHEBI:456215"/>
        <dbReference type="EC" id="6.1.1.5"/>
    </reaction>
    <physiologicalReaction direction="left-to-right" evidence="5">
        <dbReference type="Rhea" id="RHEA:11061"/>
    </physiologicalReaction>
</comment>
<comment type="subcellular location">
    <subcellularLocation>
        <location evidence="5">Mitochondrion matrix</location>
    </subcellularLocation>
</comment>
<comment type="similarity">
    <text evidence="5">Belongs to the class-I aminoacyl-tRNA synthetase family.</text>
</comment>
<comment type="sequence caution" evidence="5">
    <conflict type="erroneous initiation">
        <sequence resource="EMBL-CDS" id="BAE01429"/>
    </conflict>
</comment>
<dbReference type="EC" id="6.1.1.5" evidence="1"/>
<dbReference type="EMBL" id="AB169344">
    <property type="protein sequence ID" value="BAE01429.1"/>
    <property type="status" value="ALT_INIT"/>
    <property type="molecule type" value="mRNA"/>
</dbReference>
<dbReference type="SMR" id="Q4R646"/>
<dbReference type="STRING" id="9541.ENSMFAP00000045207"/>
<dbReference type="eggNOG" id="KOG0433">
    <property type="taxonomic scope" value="Eukaryota"/>
</dbReference>
<dbReference type="OrthoDB" id="10264412at2759"/>
<dbReference type="Proteomes" id="UP000233100">
    <property type="component" value="Unplaced"/>
</dbReference>
<dbReference type="GO" id="GO:0005759">
    <property type="term" value="C:mitochondrial matrix"/>
    <property type="evidence" value="ECO:0007669"/>
    <property type="project" value="UniProtKB-SubCell"/>
</dbReference>
<dbReference type="GO" id="GO:0002161">
    <property type="term" value="F:aminoacyl-tRNA deacylase activity"/>
    <property type="evidence" value="ECO:0007669"/>
    <property type="project" value="InterPro"/>
</dbReference>
<dbReference type="GO" id="GO:0005524">
    <property type="term" value="F:ATP binding"/>
    <property type="evidence" value="ECO:0007669"/>
    <property type="project" value="UniProtKB-KW"/>
</dbReference>
<dbReference type="GO" id="GO:0004822">
    <property type="term" value="F:isoleucine-tRNA ligase activity"/>
    <property type="evidence" value="ECO:0007669"/>
    <property type="project" value="UniProtKB-EC"/>
</dbReference>
<dbReference type="GO" id="GO:0000049">
    <property type="term" value="F:tRNA binding"/>
    <property type="evidence" value="ECO:0007669"/>
    <property type="project" value="InterPro"/>
</dbReference>
<dbReference type="GO" id="GO:0006428">
    <property type="term" value="P:isoleucyl-tRNA aminoacylation"/>
    <property type="evidence" value="ECO:0007669"/>
    <property type="project" value="InterPro"/>
</dbReference>
<dbReference type="GO" id="GO:0032543">
    <property type="term" value="P:mitochondrial translation"/>
    <property type="evidence" value="ECO:0007669"/>
    <property type="project" value="TreeGrafter"/>
</dbReference>
<dbReference type="CDD" id="cd07960">
    <property type="entry name" value="Anticodon_Ia_Ile_BEm"/>
    <property type="match status" value="1"/>
</dbReference>
<dbReference type="FunFam" id="1.10.10.830:FF:000002">
    <property type="entry name" value="Isoleucine--tRNA ligase, mitochondrial"/>
    <property type="match status" value="1"/>
</dbReference>
<dbReference type="FunFam" id="1.10.730.20:FF:000002">
    <property type="entry name" value="isoleucine--tRNA ligase, mitochondrial"/>
    <property type="match status" value="1"/>
</dbReference>
<dbReference type="FunFam" id="3.40.50.620:FF:000137">
    <property type="entry name" value="Isoleucyl-tRNA synthetase 2, mitochondrial"/>
    <property type="match status" value="1"/>
</dbReference>
<dbReference type="FunFam" id="3.90.740.10:FF:000009">
    <property type="entry name" value="Isoleucyl-tRNA synthetase 2, mitochondrial"/>
    <property type="match status" value="1"/>
</dbReference>
<dbReference type="Gene3D" id="1.10.730.20">
    <property type="match status" value="1"/>
</dbReference>
<dbReference type="Gene3D" id="3.40.50.620">
    <property type="entry name" value="HUPs"/>
    <property type="match status" value="2"/>
</dbReference>
<dbReference type="Gene3D" id="1.10.10.830">
    <property type="entry name" value="Ile-tRNA synthetase CP2 domain-like"/>
    <property type="match status" value="1"/>
</dbReference>
<dbReference type="Gene3D" id="3.90.740.10">
    <property type="entry name" value="Valyl/Leucyl/Isoleucyl-tRNA synthetase, editing domain"/>
    <property type="match status" value="1"/>
</dbReference>
<dbReference type="HAMAP" id="MF_02002">
    <property type="entry name" value="Ile_tRNA_synth_type1"/>
    <property type="match status" value="1"/>
</dbReference>
<dbReference type="InterPro" id="IPR001412">
    <property type="entry name" value="aa-tRNA-synth_I_CS"/>
</dbReference>
<dbReference type="InterPro" id="IPR002300">
    <property type="entry name" value="aa-tRNA-synth_Ia"/>
</dbReference>
<dbReference type="InterPro" id="IPR033708">
    <property type="entry name" value="Anticodon_Ile_BEm"/>
</dbReference>
<dbReference type="InterPro" id="IPR002301">
    <property type="entry name" value="Ile-tRNA-ligase"/>
</dbReference>
<dbReference type="InterPro" id="IPR023585">
    <property type="entry name" value="Ile-tRNA-ligase_type1"/>
</dbReference>
<dbReference type="InterPro" id="IPR050081">
    <property type="entry name" value="Ile-tRNA_ligase"/>
</dbReference>
<dbReference type="InterPro" id="IPR013155">
    <property type="entry name" value="M/V/L/I-tRNA-synth_anticd-bd"/>
</dbReference>
<dbReference type="InterPro" id="IPR014729">
    <property type="entry name" value="Rossmann-like_a/b/a_fold"/>
</dbReference>
<dbReference type="InterPro" id="IPR009080">
    <property type="entry name" value="tRNAsynth_Ia_anticodon-bd"/>
</dbReference>
<dbReference type="InterPro" id="IPR009008">
    <property type="entry name" value="Val/Leu/Ile-tRNA-synth_edit"/>
</dbReference>
<dbReference type="InterPro" id="IPR010663">
    <property type="entry name" value="Znf_FPG/IleRS"/>
</dbReference>
<dbReference type="NCBIfam" id="TIGR00392">
    <property type="entry name" value="ileS"/>
    <property type="match status" value="1"/>
</dbReference>
<dbReference type="PANTHER" id="PTHR42765:SF1">
    <property type="entry name" value="ISOLEUCINE--TRNA LIGASE, MITOCHONDRIAL"/>
    <property type="match status" value="1"/>
</dbReference>
<dbReference type="PANTHER" id="PTHR42765">
    <property type="entry name" value="SOLEUCYL-TRNA SYNTHETASE"/>
    <property type="match status" value="1"/>
</dbReference>
<dbReference type="Pfam" id="PF08264">
    <property type="entry name" value="Anticodon_1"/>
    <property type="match status" value="1"/>
</dbReference>
<dbReference type="Pfam" id="PF00133">
    <property type="entry name" value="tRNA-synt_1"/>
    <property type="match status" value="1"/>
</dbReference>
<dbReference type="Pfam" id="PF06827">
    <property type="entry name" value="zf-FPG_IleRS"/>
    <property type="match status" value="1"/>
</dbReference>
<dbReference type="PRINTS" id="PR00984">
    <property type="entry name" value="TRNASYNTHILE"/>
</dbReference>
<dbReference type="SUPFAM" id="SSF47323">
    <property type="entry name" value="Anticodon-binding domain of a subclass of class I aminoacyl-tRNA synthetases"/>
    <property type="match status" value="1"/>
</dbReference>
<dbReference type="SUPFAM" id="SSF52374">
    <property type="entry name" value="Nucleotidylyl transferase"/>
    <property type="match status" value="1"/>
</dbReference>
<dbReference type="SUPFAM" id="SSF50677">
    <property type="entry name" value="ValRS/IleRS/LeuRS editing domain"/>
    <property type="match status" value="1"/>
</dbReference>
<dbReference type="PROSITE" id="PS00178">
    <property type="entry name" value="AA_TRNA_LIGASE_I"/>
    <property type="match status" value="1"/>
</dbReference>
<protein>
    <recommendedName>
        <fullName evidence="5">Isoleucine--tRNA ligase, mitochondrial</fullName>
        <ecNumber evidence="1">6.1.1.5</ecNumber>
    </recommendedName>
    <alternativeName>
        <fullName>Isoleucyl-tRNA synthetase</fullName>
        <shortName>IleRS</shortName>
    </alternativeName>
</protein>
<reference key="1">
    <citation type="submission" date="2005-06" db="EMBL/GenBank/DDBJ databases">
        <title>DNA sequences of macaque genes expressed in brain or testis and its evolutionary implications.</title>
        <authorList>
            <consortium name="International consortium for macaque cDNA sequencing and analysis"/>
        </authorList>
    </citation>
    <scope>NUCLEOTIDE SEQUENCE [LARGE SCALE MRNA]</scope>
    <source>
        <tissue>Testis</tissue>
    </source>
</reference>
<gene>
    <name type="primary">IARS2</name>
    <name type="ORF">QtsA-19161</name>
</gene>
<feature type="transit peptide" description="Mitochondrion" evidence="4">
    <location>
        <begin position="1" status="less than"/>
        <end position="29"/>
    </location>
</feature>
<feature type="chain" id="PRO_0000233336" description="Isoleucine--tRNA ligase, mitochondrial">
    <location>
        <begin position="30"/>
        <end position="993"/>
    </location>
</feature>
<feature type="short sequence motif" description="'HIGH' region" evidence="5">
    <location>
        <begin position="97"/>
        <end position="107"/>
    </location>
</feature>
<feature type="short sequence motif" description="'KMSKS' region" evidence="5">
    <location>
        <begin position="645"/>
        <end position="649"/>
    </location>
</feature>
<feature type="binding site" evidence="1">
    <location>
        <position position="645"/>
    </location>
    <ligand>
        <name>ATP</name>
        <dbReference type="ChEBI" id="CHEBI:30616"/>
    </ligand>
</feature>
<feature type="binding site" evidence="1">
    <location>
        <position position="648"/>
    </location>
    <ligand>
        <name>ATP</name>
        <dbReference type="ChEBI" id="CHEBI:30616"/>
    </ligand>
</feature>
<feature type="modified residue" description="N6-acetyllysine; alternate" evidence="2">
    <location>
        <position position="55"/>
    </location>
</feature>
<feature type="modified residue" description="N6-succinyllysine; alternate" evidence="2">
    <location>
        <position position="55"/>
    </location>
</feature>
<feature type="modified residue" description="N6-acetyllysine" evidence="3">
    <location>
        <position position="170"/>
    </location>
</feature>
<feature type="modified residue" description="N6-succinyllysine" evidence="2">
    <location>
        <position position="175"/>
    </location>
</feature>
<feature type="modified residue" description="N6-acetyllysine" evidence="3">
    <location>
        <position position="214"/>
    </location>
</feature>
<feature type="modified residue" description="N6-acetyllysine; alternate" evidence="3">
    <location>
        <position position="222"/>
    </location>
</feature>
<feature type="modified residue" description="N6-succinyllysine; alternate" evidence="2">
    <location>
        <position position="222"/>
    </location>
</feature>
<feature type="modified residue" description="N6-succinyllysine" evidence="2">
    <location>
        <position position="460"/>
    </location>
</feature>
<feature type="modified residue" description="N6-succinyllysine" evidence="2">
    <location>
        <position position="481"/>
    </location>
</feature>
<feature type="modified residue" description="N6-acetyllysine" evidence="2">
    <location>
        <position position="706"/>
    </location>
</feature>
<feature type="modified residue" description="N6-acetyllysine; alternate" evidence="3">
    <location>
        <position position="756"/>
    </location>
</feature>
<feature type="modified residue" description="N6-succinyllysine; alternate" evidence="2">
    <location>
        <position position="756"/>
    </location>
</feature>
<feature type="modified residue" description="N6-acetyllysine; alternate" evidence="3">
    <location>
        <position position="762"/>
    </location>
</feature>
<feature type="modified residue" description="N6-succinyllysine; alternate" evidence="2">
    <location>
        <position position="762"/>
    </location>
</feature>
<feature type="non-terminal residue">
    <location>
        <position position="1"/>
    </location>
</feature>
<proteinExistence type="evidence at transcript level"/>
<accession>Q4R646</accession>
<organism>
    <name type="scientific">Macaca fascicularis</name>
    <name type="common">Crab-eating macaque</name>
    <name type="synonym">Cynomolgus monkey</name>
    <dbReference type="NCBI Taxonomy" id="9541"/>
    <lineage>
        <taxon>Eukaryota</taxon>
        <taxon>Metazoa</taxon>
        <taxon>Chordata</taxon>
        <taxon>Craniata</taxon>
        <taxon>Vertebrata</taxon>
        <taxon>Euteleostomi</taxon>
        <taxon>Mammalia</taxon>
        <taxon>Eutheria</taxon>
        <taxon>Euarchontoglires</taxon>
        <taxon>Primates</taxon>
        <taxon>Haplorrhini</taxon>
        <taxon>Catarrhini</taxon>
        <taxon>Cercopithecidae</taxon>
        <taxon>Cercopithecinae</taxon>
        <taxon>Macaca</taxon>
    </lineage>
</organism>
<sequence length="993" mass="111941">SLWGTPRLPCSPGWQGATKRLLVRSVSGASNHQPNSNTGRYRDTVLLPQTSFPMKLLGRQQPDKELEIQQKCGFSELYSWQRERKVKTEFCLHDGPPYANGDPHVGHALNKILKDIANRFHMMSGSKVHFVPGWDCHGLPIEIKVLSELGREAQNLSAMEIREKARSFAKAAIEKQKSAFIRWGIMADWNNCYYTFDGKYEAKQLRTFYQMYDKGLVYRSYKPVFWSPSSRTALAEAELEYNPEHVSRSIYVKFPLLKPSPKLASLIDGSSPVSFLVWTTQPWTIPANEAVCYMPESKYAVVKCSKSGDLYVLAADKVETVASTLETAFETISTFSGVDLENGTCSHPLIPDKASPLLPANHVTMAKGTGLVHTAPAHGMEDYGVASQHNLPMDCLVDEDGVFTDVAGPELQNKAVLEEGTDVVIKMLQTAKNLLKEEKLVHSYPYDWRTKKPVVIRASKQWFINIADIKIAAKELLKKVKFIPGSALNGMVEMMDRRPYWCISRQRVWGVPIPVFHHKTKDEYLINSQTIEHIVKLVEQHGSDVWWTLPPEQLLPKEVLSEVGGPDALEYVPGQDILDIWFDSGTSWSHVLPGPDQRADLYLEGKDQLGGWFQSSLLTSVATRKKAPYKTVIVHGFTLGEKGEKMSKSLGNVIHPDVVVNGGQDQSKEPPYGADVLRWWVADSNVFTEVAIGPSVLNAARDDISKLRNTLRFLLGNVADFNPETDSIPVNDMYVIDQYMLHLLQDLANKITELYKQYDFGKVVRLLRTFYTRELSHFYFSIIKDRLYCEKENDPRRRSCQTALVEILDVIVRSFAPILPHLAEEVFQHIPYIKEPKSVFRTGWISTSSIWKKPGLEEAVESVCAMRDSFLGSIPGKNAAEYKVIIVIEPGLLFEIIEMLQSEETSSTSQLNELMMASESTLLAQEPRELTADVIELKGKFLINLEGGDIREESSYKVIVMPTTKEKCPRCWKYTAESSDTLCPRCAEVVSGK</sequence>